<keyword id="KW-0963">Cytoplasm</keyword>
<keyword id="KW-0378">Hydrolase</keyword>
<keyword id="KW-0460">Magnesium</keyword>
<keyword id="KW-0479">Metal-binding</keyword>
<keyword id="KW-1185">Reference proteome</keyword>
<sequence>MAGEADGKAPLGSRYPPAALNERILSSMSQKHVAAHPWHDLEIGPGAPAVFNCVVEIPRGSKVKYELDKATGLIKVDRVLYSSVVYPHNYGFIPRTLCEDGDPMDVLVLMQEQVVPGCFLRARAIGLMPMIDQGEKDDKIIAVCADDPEYRHFRDIKEIPPHRLQEIRRFFEDYKKNENKEVAVNEFLPAEDAINAIKYSMDLYGAYIIESLRK</sequence>
<proteinExistence type="evidence at transcript level"/>
<organism>
    <name type="scientific">Oryza sativa subsp. indica</name>
    <name type="common">Rice</name>
    <dbReference type="NCBI Taxonomy" id="39946"/>
    <lineage>
        <taxon>Eukaryota</taxon>
        <taxon>Viridiplantae</taxon>
        <taxon>Streptophyta</taxon>
        <taxon>Embryophyta</taxon>
        <taxon>Tracheophyta</taxon>
        <taxon>Spermatophyta</taxon>
        <taxon>Magnoliopsida</taxon>
        <taxon>Liliopsida</taxon>
        <taxon>Poales</taxon>
        <taxon>Poaceae</taxon>
        <taxon>BOP clade</taxon>
        <taxon>Oryzoideae</taxon>
        <taxon>Oryzeae</taxon>
        <taxon>Oryzinae</taxon>
        <taxon>Oryza</taxon>
        <taxon>Oryza sativa</taxon>
    </lineage>
</organism>
<reference key="1">
    <citation type="submission" date="1997-09" db="EMBL/GenBank/DDBJ databases">
        <title>Isolation and characterization of inorganic pyrophosphatase from rice.</title>
        <authorList>
            <person name="Lee M.C."/>
            <person name="Kim C.S."/>
            <person name="Eun M.Y."/>
        </authorList>
    </citation>
    <scope>NUCLEOTIDE SEQUENCE [MRNA]</scope>
    <source>
        <strain>cv. Milyang 23</strain>
        <tissue>Seed</tissue>
    </source>
</reference>
<reference key="2">
    <citation type="journal article" date="2005" name="PLoS Biol.">
        <title>The genomes of Oryza sativa: a history of duplications.</title>
        <authorList>
            <person name="Yu J."/>
            <person name="Wang J."/>
            <person name="Lin W."/>
            <person name="Li S."/>
            <person name="Li H."/>
            <person name="Zhou J."/>
            <person name="Ni P."/>
            <person name="Dong W."/>
            <person name="Hu S."/>
            <person name="Zeng C."/>
            <person name="Zhang J."/>
            <person name="Zhang Y."/>
            <person name="Li R."/>
            <person name="Xu Z."/>
            <person name="Li S."/>
            <person name="Li X."/>
            <person name="Zheng H."/>
            <person name="Cong L."/>
            <person name="Lin L."/>
            <person name="Yin J."/>
            <person name="Geng J."/>
            <person name="Li G."/>
            <person name="Shi J."/>
            <person name="Liu J."/>
            <person name="Lv H."/>
            <person name="Li J."/>
            <person name="Wang J."/>
            <person name="Deng Y."/>
            <person name="Ran L."/>
            <person name="Shi X."/>
            <person name="Wang X."/>
            <person name="Wu Q."/>
            <person name="Li C."/>
            <person name="Ren X."/>
            <person name="Wang J."/>
            <person name="Wang X."/>
            <person name="Li D."/>
            <person name="Liu D."/>
            <person name="Zhang X."/>
            <person name="Ji Z."/>
            <person name="Zhao W."/>
            <person name="Sun Y."/>
            <person name="Zhang Z."/>
            <person name="Bao J."/>
            <person name="Han Y."/>
            <person name="Dong L."/>
            <person name="Ji J."/>
            <person name="Chen P."/>
            <person name="Wu S."/>
            <person name="Liu J."/>
            <person name="Xiao Y."/>
            <person name="Bu D."/>
            <person name="Tan J."/>
            <person name="Yang L."/>
            <person name="Ye C."/>
            <person name="Zhang J."/>
            <person name="Xu J."/>
            <person name="Zhou Y."/>
            <person name="Yu Y."/>
            <person name="Zhang B."/>
            <person name="Zhuang S."/>
            <person name="Wei H."/>
            <person name="Liu B."/>
            <person name="Lei M."/>
            <person name="Yu H."/>
            <person name="Li Y."/>
            <person name="Xu H."/>
            <person name="Wei S."/>
            <person name="He X."/>
            <person name="Fang L."/>
            <person name="Zhang Z."/>
            <person name="Zhang Y."/>
            <person name="Huang X."/>
            <person name="Su Z."/>
            <person name="Tong W."/>
            <person name="Li J."/>
            <person name="Tong Z."/>
            <person name="Li S."/>
            <person name="Ye J."/>
            <person name="Wang L."/>
            <person name="Fang L."/>
            <person name="Lei T."/>
            <person name="Chen C.-S."/>
            <person name="Chen H.-C."/>
            <person name="Xu Z."/>
            <person name="Li H."/>
            <person name="Huang H."/>
            <person name="Zhang F."/>
            <person name="Xu H."/>
            <person name="Li N."/>
            <person name="Zhao C."/>
            <person name="Li S."/>
            <person name="Dong L."/>
            <person name="Huang Y."/>
            <person name="Li L."/>
            <person name="Xi Y."/>
            <person name="Qi Q."/>
            <person name="Li W."/>
            <person name="Zhang B."/>
            <person name="Hu W."/>
            <person name="Zhang Y."/>
            <person name="Tian X."/>
            <person name="Jiao Y."/>
            <person name="Liang X."/>
            <person name="Jin J."/>
            <person name="Gao L."/>
            <person name="Zheng W."/>
            <person name="Hao B."/>
            <person name="Liu S.-M."/>
            <person name="Wang W."/>
            <person name="Yuan L."/>
            <person name="Cao M."/>
            <person name="McDermott J."/>
            <person name="Samudrala R."/>
            <person name="Wang J."/>
            <person name="Wong G.K.-S."/>
            <person name="Yang H."/>
        </authorList>
    </citation>
    <scope>NUCLEOTIDE SEQUENCE [LARGE SCALE GENOMIC DNA]</scope>
    <source>
        <strain>cv. 93-11</strain>
    </source>
</reference>
<evidence type="ECO:0000250" key="1"/>
<evidence type="ECO:0000250" key="2">
    <source>
        <dbReference type="UniProtKB" id="P9WI55"/>
    </source>
</evidence>
<evidence type="ECO:0000305" key="3"/>
<gene>
    <name type="primary">IPP</name>
    <name type="ORF">OsI_008446</name>
</gene>
<comment type="catalytic activity">
    <reaction>
        <text>diphosphate + H2O = 2 phosphate + H(+)</text>
        <dbReference type="Rhea" id="RHEA:24576"/>
        <dbReference type="ChEBI" id="CHEBI:15377"/>
        <dbReference type="ChEBI" id="CHEBI:15378"/>
        <dbReference type="ChEBI" id="CHEBI:33019"/>
        <dbReference type="ChEBI" id="CHEBI:43474"/>
        <dbReference type="EC" id="3.6.1.1"/>
    </reaction>
</comment>
<comment type="cofactor">
    <cofactor evidence="1">
        <name>Mg(2+)</name>
        <dbReference type="ChEBI" id="CHEBI:18420"/>
    </cofactor>
</comment>
<comment type="subcellular location">
    <subcellularLocation>
        <location>Cytoplasm</location>
    </subcellularLocation>
</comment>
<comment type="similarity">
    <text evidence="3">Belongs to the PPase family.</text>
</comment>
<comment type="sequence caution" evidence="3">
    <conflict type="frameshift">
        <sequence resource="EMBL-CDS" id="AAB82136"/>
    </conflict>
</comment>
<accession>A2X8Q3</accession>
<accession>O22537</accession>
<accession>Q6YVH9</accession>
<accession>Q9ZSU9</accession>
<dbReference type="EC" id="3.6.1.1"/>
<dbReference type="EMBL" id="AF022733">
    <property type="protein sequence ID" value="AAB82136.1"/>
    <property type="status" value="ALT_FRAME"/>
    <property type="molecule type" value="mRNA"/>
</dbReference>
<dbReference type="EMBL" id="CM000127">
    <property type="protein sequence ID" value="EAY87213.1"/>
    <property type="molecule type" value="Genomic_DNA"/>
</dbReference>
<dbReference type="PIR" id="T02082">
    <property type="entry name" value="T02082"/>
</dbReference>
<dbReference type="SMR" id="A2X8Q3"/>
<dbReference type="STRING" id="39946.A2X8Q3"/>
<dbReference type="EnsemblPlants" id="BGIOSGA005774-TA">
    <property type="protein sequence ID" value="BGIOSGA005774-PA"/>
    <property type="gene ID" value="BGIOSGA005774"/>
</dbReference>
<dbReference type="EnsemblPlants" id="OsGoSa_02g0030460.01">
    <property type="protein sequence ID" value="OsGoSa_02g0030460.01"/>
    <property type="gene ID" value="OsGoSa_02g0030460"/>
</dbReference>
<dbReference type="EnsemblPlants" id="OsGoSa_02g0030460.02">
    <property type="protein sequence ID" value="OsGoSa_02g0030460.02"/>
    <property type="gene ID" value="OsGoSa_02g0030460"/>
</dbReference>
<dbReference type="EnsemblPlants" id="OsGoSa_02g0030460.03">
    <property type="protein sequence ID" value="OsGoSa_02g0030460.03"/>
    <property type="gene ID" value="OsGoSa_02g0030460"/>
</dbReference>
<dbReference type="EnsemblPlants" id="OsIR64_02g0030030.01">
    <property type="protein sequence ID" value="OsIR64_02g0030030.01"/>
    <property type="gene ID" value="OsIR64_02g0030030"/>
</dbReference>
<dbReference type="EnsemblPlants" id="OsKYG_02g0030100.01">
    <property type="protein sequence ID" value="OsKYG_02g0030100.01"/>
    <property type="gene ID" value="OsKYG_02g0030100"/>
</dbReference>
<dbReference type="EnsemblPlants" id="OsLaMu_02g0029920.01">
    <property type="protein sequence ID" value="OsLaMu_02g0029920.01"/>
    <property type="gene ID" value="OsLaMu_02g0029920"/>
</dbReference>
<dbReference type="EnsemblPlants" id="OsLima_02g0030340.01">
    <property type="protein sequence ID" value="OsLima_02g0030340.01"/>
    <property type="gene ID" value="OsLima_02g0030340"/>
</dbReference>
<dbReference type="EnsemblPlants" id="OsLiXu_02g0030280.01">
    <property type="protein sequence ID" value="OsLiXu_02g0030280.01"/>
    <property type="gene ID" value="OsLiXu_02g0030280"/>
</dbReference>
<dbReference type="EnsemblPlants" id="OsMH63_02G030660_01">
    <property type="protein sequence ID" value="OsMH63_02G030660_01"/>
    <property type="gene ID" value="OsMH63_02G030660"/>
</dbReference>
<dbReference type="EnsemblPlants" id="OsMH63_02G030660_02">
    <property type="protein sequence ID" value="OsMH63_02G030660_02"/>
    <property type="gene ID" value="OsMH63_02G030660"/>
</dbReference>
<dbReference type="EnsemblPlants" id="OsPr106_02g0030250.01">
    <property type="protein sequence ID" value="OsPr106_02g0030250.01"/>
    <property type="gene ID" value="OsPr106_02g0030250"/>
</dbReference>
<dbReference type="EnsemblPlants" id="OsPr106_02g0030250.02">
    <property type="protein sequence ID" value="OsPr106_02g0030250.02"/>
    <property type="gene ID" value="OsPr106_02g0030250"/>
</dbReference>
<dbReference type="EnsemblPlants" id="OsPr106_02g0030250.03">
    <property type="protein sequence ID" value="OsPr106_02g0030250.03"/>
    <property type="gene ID" value="OsPr106_02g0030250"/>
</dbReference>
<dbReference type="EnsemblPlants" id="OsZS97_02G029990_01">
    <property type="protein sequence ID" value="OsZS97_02G029990_01"/>
    <property type="gene ID" value="OsZS97_02G029990"/>
</dbReference>
<dbReference type="EnsemblPlants" id="OsZS97_02G029990_02">
    <property type="protein sequence ID" value="OsZS97_02G029990_02"/>
    <property type="gene ID" value="OsZS97_02G029990"/>
</dbReference>
<dbReference type="Gramene" id="BGIOSGA005774-TA">
    <property type="protein sequence ID" value="BGIOSGA005774-PA"/>
    <property type="gene ID" value="BGIOSGA005774"/>
</dbReference>
<dbReference type="Gramene" id="OsGoSa_02g0030460.01">
    <property type="protein sequence ID" value="OsGoSa_02g0030460.01"/>
    <property type="gene ID" value="OsGoSa_02g0030460"/>
</dbReference>
<dbReference type="Gramene" id="OsGoSa_02g0030460.02">
    <property type="protein sequence ID" value="OsGoSa_02g0030460.02"/>
    <property type="gene ID" value="OsGoSa_02g0030460"/>
</dbReference>
<dbReference type="Gramene" id="OsGoSa_02g0030460.03">
    <property type="protein sequence ID" value="OsGoSa_02g0030460.03"/>
    <property type="gene ID" value="OsGoSa_02g0030460"/>
</dbReference>
<dbReference type="Gramene" id="OsIR64_02g0030030.01">
    <property type="protein sequence ID" value="OsIR64_02g0030030.01"/>
    <property type="gene ID" value="OsIR64_02g0030030"/>
</dbReference>
<dbReference type="Gramene" id="OsKYG_02g0030100.01">
    <property type="protein sequence ID" value="OsKYG_02g0030100.01"/>
    <property type="gene ID" value="OsKYG_02g0030100"/>
</dbReference>
<dbReference type="Gramene" id="OsLaMu_02g0029920.01">
    <property type="protein sequence ID" value="OsLaMu_02g0029920.01"/>
    <property type="gene ID" value="OsLaMu_02g0029920"/>
</dbReference>
<dbReference type="Gramene" id="OsLima_02g0030340.01">
    <property type="protein sequence ID" value="OsLima_02g0030340.01"/>
    <property type="gene ID" value="OsLima_02g0030340"/>
</dbReference>
<dbReference type="Gramene" id="OsLiXu_02g0030280.01">
    <property type="protein sequence ID" value="OsLiXu_02g0030280.01"/>
    <property type="gene ID" value="OsLiXu_02g0030280"/>
</dbReference>
<dbReference type="Gramene" id="OsMH63_02G030660_01">
    <property type="protein sequence ID" value="OsMH63_02G030660_01"/>
    <property type="gene ID" value="OsMH63_02G030660"/>
</dbReference>
<dbReference type="Gramene" id="OsMH63_02G030660_02">
    <property type="protein sequence ID" value="OsMH63_02G030660_02"/>
    <property type="gene ID" value="OsMH63_02G030660"/>
</dbReference>
<dbReference type="Gramene" id="OsPr106_02g0030250.01">
    <property type="protein sequence ID" value="OsPr106_02g0030250.01"/>
    <property type="gene ID" value="OsPr106_02g0030250"/>
</dbReference>
<dbReference type="Gramene" id="OsPr106_02g0030250.02">
    <property type="protein sequence ID" value="OsPr106_02g0030250.02"/>
    <property type="gene ID" value="OsPr106_02g0030250"/>
</dbReference>
<dbReference type="Gramene" id="OsPr106_02g0030250.03">
    <property type="protein sequence ID" value="OsPr106_02g0030250.03"/>
    <property type="gene ID" value="OsPr106_02g0030250"/>
</dbReference>
<dbReference type="Gramene" id="OsZS97_02G029990_01">
    <property type="protein sequence ID" value="OsZS97_02G029990_01"/>
    <property type="gene ID" value="OsZS97_02G029990"/>
</dbReference>
<dbReference type="Gramene" id="OsZS97_02G029990_02">
    <property type="protein sequence ID" value="OsZS97_02G029990_02"/>
    <property type="gene ID" value="OsZS97_02G029990"/>
</dbReference>
<dbReference type="HOGENOM" id="CLU_073198_2_1_1"/>
<dbReference type="OMA" id="TYYWEHY"/>
<dbReference type="OrthoDB" id="1608002at2759"/>
<dbReference type="Proteomes" id="UP000007015">
    <property type="component" value="Chromosome 2"/>
</dbReference>
<dbReference type="GO" id="GO:0005737">
    <property type="term" value="C:cytoplasm"/>
    <property type="evidence" value="ECO:0007669"/>
    <property type="project" value="UniProtKB-SubCell"/>
</dbReference>
<dbReference type="GO" id="GO:0004427">
    <property type="term" value="F:inorganic diphosphate phosphatase activity"/>
    <property type="evidence" value="ECO:0007669"/>
    <property type="project" value="UniProtKB-EC"/>
</dbReference>
<dbReference type="GO" id="GO:0000287">
    <property type="term" value="F:magnesium ion binding"/>
    <property type="evidence" value="ECO:0007669"/>
    <property type="project" value="InterPro"/>
</dbReference>
<dbReference type="GO" id="GO:0006796">
    <property type="term" value="P:phosphate-containing compound metabolic process"/>
    <property type="evidence" value="ECO:0007669"/>
    <property type="project" value="InterPro"/>
</dbReference>
<dbReference type="CDD" id="cd00412">
    <property type="entry name" value="pyrophosphatase"/>
    <property type="match status" value="1"/>
</dbReference>
<dbReference type="FunFam" id="3.90.80.10:FF:000002">
    <property type="entry name" value="Soluble inorganic pyrophosphatase 4"/>
    <property type="match status" value="1"/>
</dbReference>
<dbReference type="Gene3D" id="3.90.80.10">
    <property type="entry name" value="Inorganic pyrophosphatase"/>
    <property type="match status" value="1"/>
</dbReference>
<dbReference type="HAMAP" id="MF_00209">
    <property type="entry name" value="Inorganic_PPase"/>
    <property type="match status" value="1"/>
</dbReference>
<dbReference type="InterPro" id="IPR008162">
    <property type="entry name" value="Pyrophosphatase"/>
</dbReference>
<dbReference type="InterPro" id="IPR036649">
    <property type="entry name" value="Pyrophosphatase_sf"/>
</dbReference>
<dbReference type="PANTHER" id="PTHR10286">
    <property type="entry name" value="INORGANIC PYROPHOSPHATASE"/>
    <property type="match status" value="1"/>
</dbReference>
<dbReference type="Pfam" id="PF00719">
    <property type="entry name" value="Pyrophosphatase"/>
    <property type="match status" value="1"/>
</dbReference>
<dbReference type="SUPFAM" id="SSF50324">
    <property type="entry name" value="Inorganic pyrophosphatase"/>
    <property type="match status" value="1"/>
</dbReference>
<dbReference type="PROSITE" id="PS00387">
    <property type="entry name" value="PPASE"/>
    <property type="match status" value="1"/>
</dbReference>
<feature type="chain" id="PRO_0000301654" description="Soluble inorganic pyrophosphatase">
    <location>
        <begin position="1"/>
        <end position="214"/>
    </location>
</feature>
<feature type="binding site" evidence="2">
    <location>
        <position position="64"/>
    </location>
    <ligand>
        <name>substrate</name>
    </ligand>
</feature>
<feature type="binding site" evidence="2">
    <location>
        <position position="78"/>
    </location>
    <ligand>
        <name>substrate</name>
    </ligand>
</feature>
<feature type="binding site" evidence="2">
    <location>
        <position position="90"/>
    </location>
    <ligand>
        <name>substrate</name>
    </ligand>
</feature>
<feature type="binding site" evidence="1">
    <location>
        <position position="100"/>
    </location>
    <ligand>
        <name>Mg(2+)</name>
        <dbReference type="ChEBI" id="CHEBI:18420"/>
        <label>1</label>
    </ligand>
</feature>
<feature type="binding site" evidence="1">
    <location>
        <position position="105"/>
    </location>
    <ligand>
        <name>Mg(2+)</name>
        <dbReference type="ChEBI" id="CHEBI:18420"/>
        <label>1</label>
    </ligand>
</feature>
<feature type="binding site" evidence="1">
    <location>
        <position position="105"/>
    </location>
    <ligand>
        <name>Mg(2+)</name>
        <dbReference type="ChEBI" id="CHEBI:18420"/>
        <label>2</label>
    </ligand>
</feature>
<feature type="binding site" evidence="1">
    <location>
        <position position="137"/>
    </location>
    <ligand>
        <name>Mg(2+)</name>
        <dbReference type="ChEBI" id="CHEBI:18420"/>
        <label>1</label>
    </ligand>
</feature>
<feature type="binding site" evidence="2">
    <location>
        <position position="174"/>
    </location>
    <ligand>
        <name>substrate</name>
    </ligand>
</feature>
<feature type="sequence conflict" description="In Ref. 1; AAB82136." evidence="3" ref="1">
    <original>Y</original>
    <variation>C</variation>
    <location>
        <position position="65"/>
    </location>
</feature>
<feature type="sequence conflict" description="In Ref. 1; AAB82136." evidence="3" ref="1">
    <original>C</original>
    <variation>R</variation>
    <location>
        <position position="144"/>
    </location>
</feature>
<feature type="sequence conflict" description="In Ref. 1; AAB82136." evidence="3" ref="1">
    <original>L</original>
    <variation>F</variation>
    <location>
        <position position="188"/>
    </location>
</feature>
<feature type="sequence conflict" description="In Ref. 1; AAB82136." evidence="3" ref="1">
    <original>L</original>
    <variation>F</variation>
    <location>
        <position position="203"/>
    </location>
</feature>
<feature type="sequence conflict" description="In Ref. 1; AAB82136." evidence="3" ref="1">
    <original>Y</original>
    <variation>H</variation>
    <location>
        <position position="207"/>
    </location>
</feature>
<feature type="sequence conflict" description="In Ref. 1; AAB82136." evidence="3" ref="1">
    <original>L</original>
    <variation>S</variation>
    <location>
        <position position="212"/>
    </location>
</feature>
<name>IPYR_ORYSI</name>
<protein>
    <recommendedName>
        <fullName>Soluble inorganic pyrophosphatase</fullName>
        <ecNumber>3.6.1.1</ecNumber>
    </recommendedName>
    <alternativeName>
        <fullName>Pyrophosphate phospho-hydrolase</fullName>
        <shortName>PPase</shortName>
    </alternativeName>
</protein>